<name>GATD_THEAC</name>
<gene>
    <name evidence="1" type="primary">gatD</name>
    <name type="ordered locus">Ta0972</name>
</gene>
<comment type="function">
    <text evidence="1">Allows the formation of correctly charged Gln-tRNA(Gln) through the transamidation of misacylated Glu-tRNA(Gln) in organisms which lack glutaminyl-tRNA synthetase. The reaction takes place in the presence of glutamine and ATP through an activated gamma-phospho-Glu-tRNA(Gln). The GatDE system is specific for glutamate and does not act on aspartate.</text>
</comment>
<comment type="catalytic activity">
    <reaction evidence="1">
        <text>L-glutamyl-tRNA(Gln) + L-glutamine + ATP + H2O = L-glutaminyl-tRNA(Gln) + L-glutamate + ADP + phosphate + H(+)</text>
        <dbReference type="Rhea" id="RHEA:17521"/>
        <dbReference type="Rhea" id="RHEA-COMP:9681"/>
        <dbReference type="Rhea" id="RHEA-COMP:9684"/>
        <dbReference type="ChEBI" id="CHEBI:15377"/>
        <dbReference type="ChEBI" id="CHEBI:15378"/>
        <dbReference type="ChEBI" id="CHEBI:29985"/>
        <dbReference type="ChEBI" id="CHEBI:30616"/>
        <dbReference type="ChEBI" id="CHEBI:43474"/>
        <dbReference type="ChEBI" id="CHEBI:58359"/>
        <dbReference type="ChEBI" id="CHEBI:78520"/>
        <dbReference type="ChEBI" id="CHEBI:78521"/>
        <dbReference type="ChEBI" id="CHEBI:456216"/>
    </reaction>
</comment>
<comment type="subunit">
    <text evidence="1">Heterodimer of GatD and GatE.</text>
</comment>
<comment type="similarity">
    <text evidence="1">Belongs to the asparaginase 1 family. GatD subfamily.</text>
</comment>
<feature type="chain" id="PRO_0000140066" description="Glutamyl-tRNA(Gln) amidotransferase subunit D">
    <location>
        <begin position="1"/>
        <end position="409"/>
    </location>
</feature>
<feature type="domain" description="Asparaginase/glutaminase" evidence="2">
    <location>
        <begin position="68"/>
        <end position="390"/>
    </location>
</feature>
<feature type="active site" evidence="1">
    <location>
        <position position="78"/>
    </location>
</feature>
<feature type="active site" evidence="1">
    <location>
        <position position="152"/>
    </location>
</feature>
<feature type="active site" evidence="1">
    <location>
        <position position="153"/>
    </location>
</feature>
<feature type="active site" evidence="1">
    <location>
        <position position="230"/>
    </location>
</feature>
<reference key="1">
    <citation type="journal article" date="2000" name="Nature">
        <title>The genome sequence of the thermoacidophilic scavenger Thermoplasma acidophilum.</title>
        <authorList>
            <person name="Ruepp A."/>
            <person name="Graml W."/>
            <person name="Santos-Martinez M.-L."/>
            <person name="Koretke K.K."/>
            <person name="Volker C."/>
            <person name="Mewes H.-W."/>
            <person name="Frishman D."/>
            <person name="Stocker S."/>
            <person name="Lupas A.N."/>
            <person name="Baumeister W."/>
        </authorList>
    </citation>
    <scope>NUCLEOTIDE SEQUENCE [LARGE SCALE GENOMIC DNA]</scope>
    <source>
        <strain>ATCC 25905 / DSM 1728 / JCM 9062 / NBRC 15155 / AMRC-C165</strain>
    </source>
</reference>
<evidence type="ECO:0000255" key="1">
    <source>
        <dbReference type="HAMAP-Rule" id="MF_00586"/>
    </source>
</evidence>
<evidence type="ECO:0000255" key="2">
    <source>
        <dbReference type="PROSITE-ProRule" id="PRU01068"/>
    </source>
</evidence>
<protein>
    <recommendedName>
        <fullName evidence="1">Glutamyl-tRNA(Gln) amidotransferase subunit D</fullName>
        <shortName evidence="1">Glu-ADT subunit D</shortName>
        <ecNumber evidence="1">6.3.5.-</ecNumber>
    </recommendedName>
</protein>
<keyword id="KW-0067">ATP-binding</keyword>
<keyword id="KW-0436">Ligase</keyword>
<keyword id="KW-0547">Nucleotide-binding</keyword>
<keyword id="KW-0648">Protein biosynthesis</keyword>
<keyword id="KW-1185">Reference proteome</keyword>
<dbReference type="EC" id="6.3.5.-" evidence="1"/>
<dbReference type="EMBL" id="AL445066">
    <property type="protein sequence ID" value="CAC12101.1"/>
    <property type="molecule type" value="Genomic_DNA"/>
</dbReference>
<dbReference type="RefSeq" id="WP_010901383.1">
    <property type="nucleotide sequence ID" value="NC_002578.1"/>
</dbReference>
<dbReference type="SMR" id="Q9HJJ5"/>
<dbReference type="FunCoup" id="Q9HJJ5">
    <property type="interactions" value="55"/>
</dbReference>
<dbReference type="STRING" id="273075.gene:9572190"/>
<dbReference type="PaxDb" id="273075-Ta0972"/>
<dbReference type="EnsemblBacteria" id="CAC12101">
    <property type="protein sequence ID" value="CAC12101"/>
    <property type="gene ID" value="CAC12101"/>
</dbReference>
<dbReference type="KEGG" id="tac:Ta0972"/>
<dbReference type="eggNOG" id="arCOG01924">
    <property type="taxonomic scope" value="Archaea"/>
</dbReference>
<dbReference type="HOGENOM" id="CLU_019134_2_1_2"/>
<dbReference type="InParanoid" id="Q9HJJ5"/>
<dbReference type="OrthoDB" id="371959at2157"/>
<dbReference type="Proteomes" id="UP000001024">
    <property type="component" value="Chromosome"/>
</dbReference>
<dbReference type="GO" id="GO:0004067">
    <property type="term" value="F:asparaginase activity"/>
    <property type="evidence" value="ECO:0007669"/>
    <property type="project" value="InterPro"/>
</dbReference>
<dbReference type="GO" id="GO:0005524">
    <property type="term" value="F:ATP binding"/>
    <property type="evidence" value="ECO:0007669"/>
    <property type="project" value="UniProtKB-KW"/>
</dbReference>
<dbReference type="GO" id="GO:0050567">
    <property type="term" value="F:glutaminyl-tRNA synthase (glutamine-hydrolyzing) activity"/>
    <property type="evidence" value="ECO:0007669"/>
    <property type="project" value="UniProtKB-UniRule"/>
</dbReference>
<dbReference type="GO" id="GO:0006520">
    <property type="term" value="P:amino acid metabolic process"/>
    <property type="evidence" value="ECO:0007669"/>
    <property type="project" value="InterPro"/>
</dbReference>
<dbReference type="GO" id="GO:0006450">
    <property type="term" value="P:regulation of translational fidelity"/>
    <property type="evidence" value="ECO:0007669"/>
    <property type="project" value="InterPro"/>
</dbReference>
<dbReference type="GO" id="GO:0006412">
    <property type="term" value="P:translation"/>
    <property type="evidence" value="ECO:0007669"/>
    <property type="project" value="UniProtKB-UniRule"/>
</dbReference>
<dbReference type="Gene3D" id="3.40.50.40">
    <property type="match status" value="1"/>
</dbReference>
<dbReference type="Gene3D" id="3.40.50.1170">
    <property type="entry name" value="L-asparaginase, N-terminal domain"/>
    <property type="match status" value="1"/>
</dbReference>
<dbReference type="HAMAP" id="MF_00586">
    <property type="entry name" value="GatD"/>
    <property type="match status" value="1"/>
</dbReference>
<dbReference type="InterPro" id="IPR006033">
    <property type="entry name" value="AsnA_fam"/>
</dbReference>
<dbReference type="InterPro" id="IPR036152">
    <property type="entry name" value="Asp/glu_Ase-like_sf"/>
</dbReference>
<dbReference type="InterPro" id="IPR006034">
    <property type="entry name" value="Asparaginase/glutaminase-like"/>
</dbReference>
<dbReference type="InterPro" id="IPR020827">
    <property type="entry name" value="Asparaginase/glutaminase_AS1"/>
</dbReference>
<dbReference type="InterPro" id="IPR027475">
    <property type="entry name" value="Asparaginase/glutaminase_AS2"/>
</dbReference>
<dbReference type="InterPro" id="IPR040919">
    <property type="entry name" value="Asparaginase_C"/>
</dbReference>
<dbReference type="InterPro" id="IPR011878">
    <property type="entry name" value="GatD"/>
</dbReference>
<dbReference type="InterPro" id="IPR037222">
    <property type="entry name" value="GatD_N_sf"/>
</dbReference>
<dbReference type="InterPro" id="IPR027473">
    <property type="entry name" value="L-asparaginase_C"/>
</dbReference>
<dbReference type="InterPro" id="IPR027474">
    <property type="entry name" value="L-asparaginase_N"/>
</dbReference>
<dbReference type="InterPro" id="IPR037152">
    <property type="entry name" value="L-asparaginase_N_sf"/>
</dbReference>
<dbReference type="NCBIfam" id="TIGR00519">
    <property type="entry name" value="asnASE_I"/>
    <property type="match status" value="1"/>
</dbReference>
<dbReference type="NCBIfam" id="TIGR02153">
    <property type="entry name" value="gatD_arch"/>
    <property type="match status" value="1"/>
</dbReference>
<dbReference type="NCBIfam" id="NF003217">
    <property type="entry name" value="PRK04183.1"/>
    <property type="match status" value="1"/>
</dbReference>
<dbReference type="PANTHER" id="PTHR11707:SF28">
    <property type="entry name" value="60 KDA LYSOPHOSPHOLIPASE"/>
    <property type="match status" value="1"/>
</dbReference>
<dbReference type="PANTHER" id="PTHR11707">
    <property type="entry name" value="L-ASPARAGINASE"/>
    <property type="match status" value="1"/>
</dbReference>
<dbReference type="Pfam" id="PF00710">
    <property type="entry name" value="Asparaginase"/>
    <property type="match status" value="1"/>
</dbReference>
<dbReference type="Pfam" id="PF17763">
    <property type="entry name" value="Asparaginase_C"/>
    <property type="match status" value="1"/>
</dbReference>
<dbReference type="PIRSF" id="PIRSF500175">
    <property type="entry name" value="Glu_ADT_D"/>
    <property type="match status" value="1"/>
</dbReference>
<dbReference type="PIRSF" id="PIRSF001220">
    <property type="entry name" value="L-ASNase_gatD"/>
    <property type="match status" value="1"/>
</dbReference>
<dbReference type="PRINTS" id="PR00139">
    <property type="entry name" value="ASNGLNASE"/>
</dbReference>
<dbReference type="SMART" id="SM00870">
    <property type="entry name" value="Asparaginase"/>
    <property type="match status" value="1"/>
</dbReference>
<dbReference type="SUPFAM" id="SSF141300">
    <property type="entry name" value="GatD N-terminal domain-like"/>
    <property type="match status" value="1"/>
</dbReference>
<dbReference type="SUPFAM" id="SSF53774">
    <property type="entry name" value="Glutaminase/Asparaginase"/>
    <property type="match status" value="1"/>
</dbReference>
<dbReference type="PROSITE" id="PS00144">
    <property type="entry name" value="ASN_GLN_ASE_1"/>
    <property type="match status" value="1"/>
</dbReference>
<dbReference type="PROSITE" id="PS00917">
    <property type="entry name" value="ASN_GLN_ASE_2"/>
    <property type="match status" value="1"/>
</dbReference>
<dbReference type="PROSITE" id="PS51732">
    <property type="entry name" value="ASN_GLN_ASE_3"/>
    <property type="match status" value="1"/>
</dbReference>
<sequence>MERAVLRYKNSVISGLIINESNGLITLKASNGYNMTFDRSEVEFIERKKEESPERKSIEAVEKGQGDRKISVLATGGTIASRVDYETGAVSPVSDPELIFGGSDILTRFTVAVKPILNEFSENLKPADWIRIGQAVADESSEADGVVVAHGTDTMAYTSSALAFMFERMRVPVVFVGAQRSSDRPSSDSRENMQAAINFAGTDLGEVGISMHASTSDGHVSLLRSVRSRKMHTSRRDAFESIGIPPLAEYDGSVKFLIDYRRVSDTVEFRPDLDDRVSMIYFHPGLNAGDLENMIAEKHAVVILGTGLGHMAKDLIPVVKKYTADGNYAIMASQCIYGSTDLNVYSTGRELLAAGVIEAGNMVPEVAYVKAMYLLGQYPHDLFRDLFRKNMRGEIVERDLPVEIIKLGR</sequence>
<organism>
    <name type="scientific">Thermoplasma acidophilum (strain ATCC 25905 / DSM 1728 / JCM 9062 / NBRC 15155 / AMRC-C165)</name>
    <dbReference type="NCBI Taxonomy" id="273075"/>
    <lineage>
        <taxon>Archaea</taxon>
        <taxon>Methanobacteriati</taxon>
        <taxon>Thermoplasmatota</taxon>
        <taxon>Thermoplasmata</taxon>
        <taxon>Thermoplasmatales</taxon>
        <taxon>Thermoplasmataceae</taxon>
        <taxon>Thermoplasma</taxon>
    </lineage>
</organism>
<proteinExistence type="inferred from homology"/>
<accession>Q9HJJ5</accession>